<sequence>MTLSFAHFTYLFTILLGLTNIALASDPETILVTITKTNDANGVVTTTVSPALVSTSTIVQAGTTTLYTTWCPLTVSTSSAAEISPSISYATTLSRFSTLTLSTEVCSHEACPSSSTLPTTTLSVTSKFTSYICPTCHTTAISSLSEVGTTTVVSSSAIEPSSASIISPVTSTLSSTTSSNPTTTSLSSTSTSPSSTSTSPSSTSTSSSSTSTSSSSTSTSSSSTSTSPSSTSTSSSLTSTSSSSTSTSQSSTSTSSSSTSTSPSSTSTSSSSTSTSPSSKSTSASSTSTSSYSTSTSPSLTSSSPTLASTSPSSTSISSTFTDSTSSLGSSIASSSTSVSLYSPSTPVYSVPSTSSNVATPSMTSSTVETTVSSQSSSEYITKSSISTTIPSFSMSTYFTTVSGVTTMYTTWCPYSSESETSTLTSMHETVTTDATVCTHESCMPSQTTSLITSSIKMSTKNVATSVSTSTVESSYACSTCAETSHSYSSVQTASSSSVTQQTTSTKSWVSSMTTSDEDFNKHATGKYHVTSSGTSTISTSVSEATSTSSIDSESQEQSSHLLSTSVLSSSSLSATLSSDSTILLFSSVSSLSVEQSPVTTLQISSTSEILQPTSSTAIATISASTSSLSATSISTPSTSVESTIESSSLTPTVSSIFLSSSSAPSSLQTSVTTTEVSTTSISIQYQTSSMVTISQYMGSGSQTRLPLGKLVFAIMAVACNVIFS</sequence>
<keyword id="KW-0130">Cell adhesion</keyword>
<keyword id="KW-0134">Cell wall</keyword>
<keyword id="KW-1015">Disulfide bond</keyword>
<keyword id="KW-0325">Glycoprotein</keyword>
<keyword id="KW-0336">GPI-anchor</keyword>
<keyword id="KW-0449">Lipoprotein</keyword>
<keyword id="KW-0472">Membrane</keyword>
<keyword id="KW-0589">Pheromone response</keyword>
<keyword id="KW-1185">Reference proteome</keyword>
<keyword id="KW-0677">Repeat</keyword>
<keyword id="KW-0964">Secreted</keyword>
<keyword id="KW-0732">Signal</keyword>
<proteinExistence type="evidence at protein level"/>
<reference key="1">
    <citation type="journal article" date="1991" name="Mol. Cell. Biol.">
        <title>The AGA1 product is involved in cell surface attachment of the Saccharomyces cerevisiae cell adhesion glycoprotein a-agglutinin.</title>
        <authorList>
            <person name="Roy A."/>
            <person name="Lu C.F."/>
            <person name="Marykwas D.L."/>
            <person name="Lipke P.N."/>
            <person name="Kurjan J."/>
        </authorList>
    </citation>
    <scope>NUCLEOTIDE SEQUENCE [GENOMIC DNA]</scope>
</reference>
<reference key="2">
    <citation type="journal article" date="1997" name="Nature">
        <title>The nucleotide sequence of Saccharomyces cerevisiae chromosome XIV and its evolutionary implications.</title>
        <authorList>
            <person name="Philippsen P."/>
            <person name="Kleine K."/>
            <person name="Poehlmann R."/>
            <person name="Duesterhoeft A."/>
            <person name="Hamberg K."/>
            <person name="Hegemann J.H."/>
            <person name="Obermaier B."/>
            <person name="Urrestarazu L.A."/>
            <person name="Aert R."/>
            <person name="Albermann K."/>
            <person name="Altmann R."/>
            <person name="Andre B."/>
            <person name="Baladron V."/>
            <person name="Ballesta J.P.G."/>
            <person name="Becam A.-M."/>
            <person name="Beinhauer J.D."/>
            <person name="Boskovic J."/>
            <person name="Buitrago M.J."/>
            <person name="Bussereau F."/>
            <person name="Coster F."/>
            <person name="Crouzet M."/>
            <person name="D'Angelo M."/>
            <person name="Dal Pero F."/>
            <person name="De Antoni A."/>
            <person name="del Rey F."/>
            <person name="Doignon F."/>
            <person name="Domdey H."/>
            <person name="Dubois E."/>
            <person name="Fiedler T.A."/>
            <person name="Fleig U."/>
            <person name="Floeth M."/>
            <person name="Fritz C."/>
            <person name="Gaillardin C."/>
            <person name="Garcia-Cantalejo J.M."/>
            <person name="Glansdorff N."/>
            <person name="Goffeau A."/>
            <person name="Gueldener U."/>
            <person name="Herbert C.J."/>
            <person name="Heumann K."/>
            <person name="Heuss-Neitzel D."/>
            <person name="Hilbert H."/>
            <person name="Hinni K."/>
            <person name="Iraqui Houssaini I."/>
            <person name="Jacquet M."/>
            <person name="Jimenez A."/>
            <person name="Jonniaux J.-L."/>
            <person name="Karpfinger-Hartl L."/>
            <person name="Lanfranchi G."/>
            <person name="Lepingle A."/>
            <person name="Levesque H."/>
            <person name="Lyck R."/>
            <person name="Maftahi M."/>
            <person name="Mallet L."/>
            <person name="Maurer C.T.C."/>
            <person name="Messenguy F."/>
            <person name="Mewes H.-W."/>
            <person name="Moestl D."/>
            <person name="Nasr F."/>
            <person name="Nicaud J.-M."/>
            <person name="Niedenthal R.K."/>
            <person name="Pandolfo D."/>
            <person name="Pierard A."/>
            <person name="Piravandi E."/>
            <person name="Planta R.J."/>
            <person name="Pohl T.M."/>
            <person name="Purnelle B."/>
            <person name="Rebischung C."/>
            <person name="Remacha M.A."/>
            <person name="Revuelta J.L."/>
            <person name="Rinke M."/>
            <person name="Saiz J.E."/>
            <person name="Sartorello F."/>
            <person name="Scherens B."/>
            <person name="Sen-Gupta M."/>
            <person name="Soler-Mira A."/>
            <person name="Urbanus J.H.M."/>
            <person name="Valle G."/>
            <person name="Van Dyck L."/>
            <person name="Verhasselt P."/>
            <person name="Vierendeels F."/>
            <person name="Vissers S."/>
            <person name="Voet M."/>
            <person name="Volckaert G."/>
            <person name="Wach A."/>
            <person name="Wambutt R."/>
            <person name="Wedler H."/>
            <person name="Zollner A."/>
            <person name="Hani J."/>
        </authorList>
    </citation>
    <scope>NUCLEOTIDE SEQUENCE [LARGE SCALE GENOMIC DNA]</scope>
    <source>
        <strain>ATCC 204508 / S288c</strain>
    </source>
</reference>
<reference key="3">
    <citation type="journal article" date="2014" name="G3 (Bethesda)">
        <title>The reference genome sequence of Saccharomyces cerevisiae: Then and now.</title>
        <authorList>
            <person name="Engel S.R."/>
            <person name="Dietrich F.S."/>
            <person name="Fisk D.G."/>
            <person name="Binkley G."/>
            <person name="Balakrishnan R."/>
            <person name="Costanzo M.C."/>
            <person name="Dwight S.S."/>
            <person name="Hitz B.C."/>
            <person name="Karra K."/>
            <person name="Nash R.S."/>
            <person name="Weng S."/>
            <person name="Wong E.D."/>
            <person name="Lloyd P."/>
            <person name="Skrzypek M.S."/>
            <person name="Miyasato S.R."/>
            <person name="Simison M."/>
            <person name="Cherry J.M."/>
        </authorList>
    </citation>
    <scope>GENOME REANNOTATION</scope>
    <source>
        <strain>ATCC 204508 / S288c</strain>
    </source>
</reference>
<reference key="4">
    <citation type="journal article" date="1994" name="EMBO J.">
        <title>Mating type-specific cell-cell recognition of Saccharomyces cerevisiae: cell wall attachment and active sites of a- and alpha-agglutinin.</title>
        <authorList>
            <person name="Cappellaro C."/>
            <person name="Baldermann C."/>
            <person name="Rachel R."/>
            <person name="Tanner W."/>
        </authorList>
    </citation>
    <scope>SUBUNIT</scope>
</reference>
<reference key="5">
    <citation type="journal article" date="2001" name="J. Biol. Chem.">
        <title>Delineation of functional regions within the subunits of the Saccharomyces cerevisiae cell adhesion molecule a-agglutinin.</title>
        <authorList>
            <person name="Shen Z.M."/>
            <person name="Wang L."/>
            <person name="Pike J."/>
            <person name="Jue C.K."/>
            <person name="Zhao H."/>
            <person name="de Nobel H."/>
            <person name="Kurjan J."/>
            <person name="Lipke P.N."/>
        </authorList>
    </citation>
    <scope>SUBUNIT</scope>
    <scope>DISULFIDE BONDS</scope>
</reference>
<reference key="6">
    <citation type="journal article" date="2003" name="Eukaryot. Cell">
        <title>Posttranslational modifications required for cell surface localization and function of the fungal adhesin Aga1p.</title>
        <authorList>
            <person name="Huang G."/>
            <person name="Zhang M."/>
            <person name="Erdman S.E."/>
        </authorList>
    </citation>
    <scope>GPI-ANCHOR</scope>
    <scope>GLYCOSYLATION</scope>
    <scope>SUBCELLULAR LOCATION</scope>
</reference>
<reference key="7">
    <citation type="journal article" date="2005" name="Nat. Genet.">
        <title>Intragenic tandem repeats generate functional variability.</title>
        <authorList>
            <person name="Verstrepen K.J."/>
            <person name="Jansen A."/>
            <person name="Lewitter F."/>
            <person name="Fink G.R."/>
        </authorList>
    </citation>
    <scope>REPEATS</scope>
</reference>
<evidence type="ECO:0000255" key="1"/>
<evidence type="ECO:0000256" key="2">
    <source>
        <dbReference type="SAM" id="MobiDB-lite"/>
    </source>
</evidence>
<evidence type="ECO:0000269" key="3">
    <source>
    </source>
</evidence>
<evidence type="ECO:0000269" key="4">
    <source>
    </source>
</evidence>
<evidence type="ECO:0000305" key="5">
    <source>
    </source>
</evidence>
<evidence type="ECO:0000305" key="6">
    <source>
    </source>
</evidence>
<organism>
    <name type="scientific">Saccharomyces cerevisiae (strain ATCC 204508 / S288c)</name>
    <name type="common">Baker's yeast</name>
    <dbReference type="NCBI Taxonomy" id="559292"/>
    <lineage>
        <taxon>Eukaryota</taxon>
        <taxon>Fungi</taxon>
        <taxon>Dikarya</taxon>
        <taxon>Ascomycota</taxon>
        <taxon>Saccharomycotina</taxon>
        <taxon>Saccharomycetes</taxon>
        <taxon>Saccharomycetales</taxon>
        <taxon>Saccharomycetaceae</taxon>
        <taxon>Saccharomyces</taxon>
    </lineage>
</organism>
<gene>
    <name type="primary">AGA1</name>
    <name type="ordered locus">YNR044W</name>
    <name type="ORF">N3431</name>
</gene>
<feature type="signal peptide" evidence="1">
    <location>
        <begin position="1"/>
        <end position="24"/>
    </location>
</feature>
<feature type="chain" id="PRO_0000020641" description="A-agglutinin anchorage subunit">
    <location>
        <begin position="25"/>
        <end position="699"/>
    </location>
</feature>
<feature type="propeptide" id="PRO_0000296627" description="Removed in mature form" evidence="1">
    <location>
        <begin position="700"/>
        <end position="725"/>
    </location>
</feature>
<feature type="repeat" description="1-1" evidence="4">
    <location>
        <begin position="53"/>
        <end position="149"/>
    </location>
</feature>
<feature type="repeat" description="2-1" evidence="4">
    <location>
        <begin position="182"/>
        <end position="188"/>
    </location>
</feature>
<feature type="repeat" description="2-2" evidence="4">
    <location>
        <begin position="189"/>
        <end position="195"/>
    </location>
</feature>
<feature type="repeat" description="2-3" evidence="4">
    <location>
        <begin position="196"/>
        <end position="202"/>
    </location>
</feature>
<feature type="repeat" description="2-4" evidence="4">
    <location>
        <begin position="203"/>
        <end position="209"/>
    </location>
</feature>
<feature type="repeat" description="2-5" evidence="4">
    <location>
        <begin position="210"/>
        <end position="216"/>
    </location>
</feature>
<feature type="repeat" description="2-6" evidence="4">
    <location>
        <begin position="217"/>
        <end position="223"/>
    </location>
</feature>
<feature type="repeat" description="2-7" evidence="4">
    <location>
        <begin position="224"/>
        <end position="230"/>
    </location>
</feature>
<feature type="repeat" description="2-8" evidence="4">
    <location>
        <begin position="231"/>
        <end position="237"/>
    </location>
</feature>
<feature type="repeat" description="2-9" evidence="4">
    <location>
        <begin position="238"/>
        <end position="244"/>
    </location>
</feature>
<feature type="repeat" description="2-10" evidence="4">
    <location>
        <begin position="245"/>
        <end position="251"/>
    </location>
</feature>
<feature type="repeat" description="2-11" evidence="4">
    <location>
        <begin position="252"/>
        <end position="258"/>
    </location>
</feature>
<feature type="repeat" description="2-12" evidence="4">
    <location>
        <begin position="259"/>
        <end position="265"/>
    </location>
</feature>
<feature type="repeat" description="2-13" evidence="4">
    <location>
        <begin position="266"/>
        <end position="272"/>
    </location>
</feature>
<feature type="repeat" description="2-14" evidence="4">
    <location>
        <begin position="273"/>
        <end position="279"/>
    </location>
</feature>
<feature type="repeat" description="2-15" evidence="4">
    <location>
        <begin position="280"/>
        <end position="286"/>
    </location>
</feature>
<feature type="repeat" description="2-16" evidence="4">
    <location>
        <begin position="287"/>
        <end position="293"/>
    </location>
</feature>
<feature type="repeat" description="2-17" evidence="4">
    <location>
        <begin position="294"/>
        <end position="300"/>
    </location>
</feature>
<feature type="repeat" description="2-18" evidence="4">
    <location>
        <begin position="301"/>
        <end position="307"/>
    </location>
</feature>
<feature type="repeat" description="1-2" evidence="4">
    <location>
        <begin position="395"/>
        <end position="493"/>
    </location>
</feature>
<feature type="region of interest" description="2 X approximate repeats">
    <location>
        <begin position="53"/>
        <end position="493"/>
    </location>
</feature>
<feature type="region of interest" description="Disordered" evidence="2">
    <location>
        <begin position="168"/>
        <end position="318"/>
    </location>
</feature>
<feature type="region of interest" description="18 X approximate tandem repeats, Ser/Thr-rich">
    <location>
        <begin position="182"/>
        <end position="307"/>
    </location>
</feature>
<feature type="region of interest" description="Disordered" evidence="2">
    <location>
        <begin position="335"/>
        <end position="363"/>
    </location>
</feature>
<feature type="lipid moiety-binding region" description="GPI-anchor amidated glycine" evidence="1">
    <location>
        <position position="699"/>
    </location>
</feature>
<feature type="disulfide bond" description="Interchain (with AGA2)" evidence="5">
    <location>
        <position position="133"/>
    </location>
</feature>
<feature type="disulfide bond" description="Interchain (with AGA2)" evidence="5">
    <location>
        <position position="136"/>
    </location>
</feature>
<name>AGA1_YEAST</name>
<protein>
    <recommendedName>
        <fullName>A-agglutinin anchorage subunit</fullName>
    </recommendedName>
    <alternativeName>
        <fullName>A-agglutinin cell wall attachment subunit</fullName>
    </alternativeName>
</protein>
<comment type="function">
    <text>Cell wall anchoring subunit of the a-agglutinin heterodimer. S.cerevisiae a and alpha cells express the complementary cell surface glycoproteins a-agglutinin and alpha-agglutinin, respectively, which interact with one another to promote cellular aggregation during mating.</text>
</comment>
<comment type="subunit">
    <text evidence="5 6">Heterodimer; disulfide-linked.</text>
</comment>
<comment type="interaction">
    <interactant intactId="EBI-2340">
        <id>P32323</id>
    </interactant>
    <interactant intactId="EBI-2347">
        <id>P32781</id>
        <label>AGA2</label>
    </interactant>
    <organismsDiffer>false</organismsDiffer>
    <experiments>2</experiments>
</comment>
<comment type="subcellular location">
    <subcellularLocation>
        <location evidence="3">Secreted</location>
        <location evidence="3">Cell wall</location>
    </subcellularLocation>
    <subcellularLocation>
        <location evidence="3">Membrane</location>
        <topology evidence="3">Lipid-anchor</topology>
        <topology evidence="3">GPI-anchor</topology>
    </subcellularLocation>
    <text>Covalently-linked GPI-modified cell wall protein (GPI-CWP).</text>
</comment>
<comment type="domain">
    <text>The number of the intragenic tandem repeats varies between different S.cerevisiae strains.</text>
</comment>
<comment type="PTM">
    <text evidence="3">Extensively O-glycosylated by PMT1 and PMT2.</text>
</comment>
<comment type="PTM">
    <text>The GPI-anchor is attached to the protein in the endoplasmic reticulum and serves to target the protein to the cell surface. There, the glucosamine-inositol phospholipid moiety is cleaved off and the GPI-modified mannoprotein is covalently attached via its lipidless GPI glycan remnant to the 1,6-beta-glucan of the outer cell wall layer.</text>
</comment>
<dbReference type="EMBL" id="M60590">
    <property type="protein sequence ID" value="AAA34382.1"/>
    <property type="molecule type" value="Genomic_DNA"/>
</dbReference>
<dbReference type="EMBL" id="Z71659">
    <property type="protein sequence ID" value="CAA96325.1"/>
    <property type="molecule type" value="Genomic_DNA"/>
</dbReference>
<dbReference type="EMBL" id="BK006947">
    <property type="protein sequence ID" value="DAA10585.1"/>
    <property type="molecule type" value="Genomic_DNA"/>
</dbReference>
<dbReference type="PIR" id="A41258">
    <property type="entry name" value="A41258"/>
</dbReference>
<dbReference type="RefSeq" id="NP_014442.1">
    <property type="nucleotide sequence ID" value="NM_001183221.1"/>
</dbReference>
<dbReference type="BioGRID" id="35869">
    <property type="interactions" value="74"/>
</dbReference>
<dbReference type="ComplexPortal" id="CPX-1838">
    <property type="entry name" value="a-agglutinin"/>
</dbReference>
<dbReference type="FunCoup" id="P32323">
    <property type="interactions" value="107"/>
</dbReference>
<dbReference type="IntAct" id="P32323">
    <property type="interactions" value="3"/>
</dbReference>
<dbReference type="STRING" id="4932.YNR044W"/>
<dbReference type="GlyGen" id="P32323">
    <property type="glycosylation" value="1 site"/>
</dbReference>
<dbReference type="PaxDb" id="4932-YNR044W"/>
<dbReference type="EnsemblFungi" id="YNR044W_mRNA">
    <property type="protein sequence ID" value="YNR044W"/>
    <property type="gene ID" value="YNR044W"/>
</dbReference>
<dbReference type="GeneID" id="855780"/>
<dbReference type="KEGG" id="sce:YNR044W"/>
<dbReference type="AGR" id="SGD:S000005327"/>
<dbReference type="SGD" id="S000005327">
    <property type="gene designation" value="AGA1"/>
</dbReference>
<dbReference type="VEuPathDB" id="FungiDB:YNR044W"/>
<dbReference type="eggNOG" id="ENOG502THFQ">
    <property type="taxonomic scope" value="Eukaryota"/>
</dbReference>
<dbReference type="HOGENOM" id="CLU_399131_0_0_1"/>
<dbReference type="InParanoid" id="P32323"/>
<dbReference type="OMA" id="CSHEACP"/>
<dbReference type="OrthoDB" id="4070533at2759"/>
<dbReference type="BioCyc" id="YEAST:G3O-33351-MONOMER"/>
<dbReference type="BioGRID-ORCS" id="855780">
    <property type="hits" value="3 hits in 10 CRISPR screens"/>
</dbReference>
<dbReference type="PRO" id="PR:P32323"/>
<dbReference type="Proteomes" id="UP000002311">
    <property type="component" value="Chromosome XIV"/>
</dbReference>
<dbReference type="RNAct" id="P32323">
    <property type="molecule type" value="protein"/>
</dbReference>
<dbReference type="GO" id="GO:0071944">
    <property type="term" value="C:cell periphery"/>
    <property type="evidence" value="ECO:0007005"/>
    <property type="project" value="SGD"/>
</dbReference>
<dbReference type="GO" id="GO:0005576">
    <property type="term" value="C:extracellular region"/>
    <property type="evidence" value="ECO:0007669"/>
    <property type="project" value="UniProtKB-KW"/>
</dbReference>
<dbReference type="GO" id="GO:0009277">
    <property type="term" value="C:fungal-type cell wall"/>
    <property type="evidence" value="ECO:0000314"/>
    <property type="project" value="SGD"/>
</dbReference>
<dbReference type="GO" id="GO:0098552">
    <property type="term" value="C:side of membrane"/>
    <property type="evidence" value="ECO:0007669"/>
    <property type="project" value="UniProtKB-KW"/>
</dbReference>
<dbReference type="GO" id="GO:0050839">
    <property type="term" value="F:cell adhesion molecule binding"/>
    <property type="evidence" value="ECO:0000315"/>
    <property type="project" value="SGD"/>
</dbReference>
<dbReference type="GO" id="GO:0000752">
    <property type="term" value="P:agglutination involved in conjugation with cellular fusion"/>
    <property type="evidence" value="ECO:0000314"/>
    <property type="project" value="ComplexPortal"/>
</dbReference>
<accession>P32323</accession>
<accession>D6W1L9</accession>